<protein>
    <recommendedName>
        <fullName evidence="1">Protein SprT</fullName>
    </recommendedName>
</protein>
<comment type="cofactor">
    <cofactor evidence="1">
        <name>Zn(2+)</name>
        <dbReference type="ChEBI" id="CHEBI:29105"/>
    </cofactor>
    <text evidence="1">Binds 1 zinc ion.</text>
</comment>
<comment type="subcellular location">
    <subcellularLocation>
        <location evidence="1">Cytoplasm</location>
    </subcellularLocation>
</comment>
<comment type="similarity">
    <text evidence="1">Belongs to the SprT family.</text>
</comment>
<evidence type="ECO:0000255" key="1">
    <source>
        <dbReference type="HAMAP-Rule" id="MF_00746"/>
    </source>
</evidence>
<accession>A8A484</accession>
<reference key="1">
    <citation type="journal article" date="2008" name="J. Bacteriol.">
        <title>The pangenome structure of Escherichia coli: comparative genomic analysis of E. coli commensal and pathogenic isolates.</title>
        <authorList>
            <person name="Rasko D.A."/>
            <person name="Rosovitz M.J."/>
            <person name="Myers G.S.A."/>
            <person name="Mongodin E.F."/>
            <person name="Fricke W.F."/>
            <person name="Gajer P."/>
            <person name="Crabtree J."/>
            <person name="Sebaihia M."/>
            <person name="Thomson N.R."/>
            <person name="Chaudhuri R."/>
            <person name="Henderson I.R."/>
            <person name="Sperandio V."/>
            <person name="Ravel J."/>
        </authorList>
    </citation>
    <scope>NUCLEOTIDE SEQUENCE [LARGE SCALE GENOMIC DNA]</scope>
    <source>
        <strain>HS</strain>
    </source>
</reference>
<organism>
    <name type="scientific">Escherichia coli O9:H4 (strain HS)</name>
    <dbReference type="NCBI Taxonomy" id="331112"/>
    <lineage>
        <taxon>Bacteria</taxon>
        <taxon>Pseudomonadati</taxon>
        <taxon>Pseudomonadota</taxon>
        <taxon>Gammaproteobacteria</taxon>
        <taxon>Enterobacterales</taxon>
        <taxon>Enterobacteriaceae</taxon>
        <taxon>Escherichia</taxon>
    </lineage>
</organism>
<proteinExistence type="inferred from homology"/>
<dbReference type="EMBL" id="CP000802">
    <property type="protein sequence ID" value="ABV07338.1"/>
    <property type="molecule type" value="Genomic_DNA"/>
</dbReference>
<dbReference type="RefSeq" id="WP_001300769.1">
    <property type="nucleotide sequence ID" value="NC_009800.1"/>
</dbReference>
<dbReference type="SMR" id="A8A484"/>
<dbReference type="KEGG" id="ecx:EcHS_A3102"/>
<dbReference type="HOGENOM" id="CLU_113336_0_1_6"/>
<dbReference type="GO" id="GO:0005737">
    <property type="term" value="C:cytoplasm"/>
    <property type="evidence" value="ECO:0007669"/>
    <property type="project" value="UniProtKB-SubCell"/>
</dbReference>
<dbReference type="GO" id="GO:0008270">
    <property type="term" value="F:zinc ion binding"/>
    <property type="evidence" value="ECO:0007669"/>
    <property type="project" value="UniProtKB-UniRule"/>
</dbReference>
<dbReference type="GO" id="GO:0006950">
    <property type="term" value="P:response to stress"/>
    <property type="evidence" value="ECO:0007669"/>
    <property type="project" value="UniProtKB-ARBA"/>
</dbReference>
<dbReference type="Gene3D" id="3.30.2010.10">
    <property type="entry name" value="Metalloproteases ('zincins'), catalytic domain"/>
    <property type="match status" value="1"/>
</dbReference>
<dbReference type="HAMAP" id="MF_00746">
    <property type="entry name" value="SprT"/>
    <property type="match status" value="1"/>
</dbReference>
<dbReference type="InterPro" id="IPR006640">
    <property type="entry name" value="SprT-like_domain"/>
</dbReference>
<dbReference type="InterPro" id="IPR035240">
    <property type="entry name" value="SprT_Zn_ribbon"/>
</dbReference>
<dbReference type="InterPro" id="IPR023483">
    <property type="entry name" value="Uncharacterised_SprT"/>
</dbReference>
<dbReference type="NCBIfam" id="NF003421">
    <property type="entry name" value="PRK04860.1"/>
    <property type="match status" value="1"/>
</dbReference>
<dbReference type="PANTHER" id="PTHR38773">
    <property type="entry name" value="PROTEIN SPRT"/>
    <property type="match status" value="1"/>
</dbReference>
<dbReference type="PANTHER" id="PTHR38773:SF1">
    <property type="entry name" value="PROTEIN SPRT"/>
    <property type="match status" value="1"/>
</dbReference>
<dbReference type="Pfam" id="PF10263">
    <property type="entry name" value="SprT-like"/>
    <property type="match status" value="1"/>
</dbReference>
<dbReference type="Pfam" id="PF17283">
    <property type="entry name" value="Zn_ribbon_SprT"/>
    <property type="match status" value="1"/>
</dbReference>
<dbReference type="SMART" id="SM00731">
    <property type="entry name" value="SprT"/>
    <property type="match status" value="1"/>
</dbReference>
<dbReference type="PROSITE" id="PS00142">
    <property type="entry name" value="ZINC_PROTEASE"/>
    <property type="match status" value="1"/>
</dbReference>
<sequence>MKTSRLPIAIQQAVMRRLREKLAQANLKLGRNYPEPKLSYTQRGTSAGTAWLESYEIRLNPVLLLENSEAFIEEVVPHELAHLLVWKHFGRVAPHGKEWKWMMENVLGVPARRTHQFELQSVRRNTFPYRCKCQEHQLTVRRHNRVVRGEAVYRCVHCGEQLVAK</sequence>
<gene>
    <name evidence="1" type="primary">sprT</name>
    <name type="ordered locus">EcHS_A3102</name>
</gene>
<feature type="chain" id="PRO_1000062176" description="Protein SprT">
    <location>
        <begin position="1"/>
        <end position="165"/>
    </location>
</feature>
<feature type="domain" description="SprT-like" evidence="1">
    <location>
        <begin position="20"/>
        <end position="163"/>
    </location>
</feature>
<feature type="active site" evidence="1">
    <location>
        <position position="79"/>
    </location>
</feature>
<feature type="binding site" evidence="1">
    <location>
        <position position="78"/>
    </location>
    <ligand>
        <name>Zn(2+)</name>
        <dbReference type="ChEBI" id="CHEBI:29105"/>
    </ligand>
</feature>
<feature type="binding site" evidence="1">
    <location>
        <position position="82"/>
    </location>
    <ligand>
        <name>Zn(2+)</name>
        <dbReference type="ChEBI" id="CHEBI:29105"/>
    </ligand>
</feature>
<keyword id="KW-0963">Cytoplasm</keyword>
<keyword id="KW-0479">Metal-binding</keyword>
<keyword id="KW-0862">Zinc</keyword>
<name>SPRT_ECOHS</name>